<protein>
    <recommendedName>
        <fullName evidence="1">tRNA (guanine-N(1)-)-methyltransferase</fullName>
        <ecNumber evidence="1">2.1.1.228</ecNumber>
    </recommendedName>
    <alternativeName>
        <fullName evidence="1">M1G-methyltransferase</fullName>
    </alternativeName>
    <alternativeName>
        <fullName evidence="1">tRNA [GM37] methyltransferase</fullName>
    </alternativeName>
</protein>
<proteinExistence type="inferred from homology"/>
<accession>Q0HSK3</accession>
<evidence type="ECO:0000255" key="1">
    <source>
        <dbReference type="HAMAP-Rule" id="MF_00605"/>
    </source>
</evidence>
<reference key="1">
    <citation type="submission" date="2006-08" db="EMBL/GenBank/DDBJ databases">
        <title>Complete sequence of chromosome 1 of Shewanella sp. MR-7.</title>
        <authorList>
            <person name="Copeland A."/>
            <person name="Lucas S."/>
            <person name="Lapidus A."/>
            <person name="Barry K."/>
            <person name="Detter J.C."/>
            <person name="Glavina del Rio T."/>
            <person name="Hammon N."/>
            <person name="Israni S."/>
            <person name="Dalin E."/>
            <person name="Tice H."/>
            <person name="Pitluck S."/>
            <person name="Kiss H."/>
            <person name="Brettin T."/>
            <person name="Bruce D."/>
            <person name="Han C."/>
            <person name="Tapia R."/>
            <person name="Gilna P."/>
            <person name="Schmutz J."/>
            <person name="Larimer F."/>
            <person name="Land M."/>
            <person name="Hauser L."/>
            <person name="Kyrpides N."/>
            <person name="Mikhailova N."/>
            <person name="Nealson K."/>
            <person name="Konstantinidis K."/>
            <person name="Klappenbach J."/>
            <person name="Tiedje J."/>
            <person name="Richardson P."/>
        </authorList>
    </citation>
    <scope>NUCLEOTIDE SEQUENCE [LARGE SCALE GENOMIC DNA]</scope>
    <source>
        <strain>MR-7</strain>
    </source>
</reference>
<gene>
    <name evidence="1" type="primary">trmD</name>
    <name type="ordered locus">Shewmr7_2918</name>
</gene>
<dbReference type="EC" id="2.1.1.228" evidence="1"/>
<dbReference type="EMBL" id="CP000444">
    <property type="protein sequence ID" value="ABI43902.1"/>
    <property type="molecule type" value="Genomic_DNA"/>
</dbReference>
<dbReference type="SMR" id="Q0HSK3"/>
<dbReference type="KEGG" id="shm:Shewmr7_2918"/>
<dbReference type="HOGENOM" id="CLU_047363_0_1_6"/>
<dbReference type="GO" id="GO:0005829">
    <property type="term" value="C:cytosol"/>
    <property type="evidence" value="ECO:0007669"/>
    <property type="project" value="TreeGrafter"/>
</dbReference>
<dbReference type="GO" id="GO:0052906">
    <property type="term" value="F:tRNA (guanine(37)-N1)-methyltransferase activity"/>
    <property type="evidence" value="ECO:0007669"/>
    <property type="project" value="UniProtKB-UniRule"/>
</dbReference>
<dbReference type="GO" id="GO:0002939">
    <property type="term" value="P:tRNA N1-guanine methylation"/>
    <property type="evidence" value="ECO:0007669"/>
    <property type="project" value="TreeGrafter"/>
</dbReference>
<dbReference type="CDD" id="cd18080">
    <property type="entry name" value="TrmD-like"/>
    <property type="match status" value="1"/>
</dbReference>
<dbReference type="FunFam" id="1.10.1270.20:FF:000001">
    <property type="entry name" value="tRNA (guanine-N(1)-)-methyltransferase"/>
    <property type="match status" value="1"/>
</dbReference>
<dbReference type="FunFam" id="3.40.1280.10:FF:000001">
    <property type="entry name" value="tRNA (guanine-N(1)-)-methyltransferase"/>
    <property type="match status" value="1"/>
</dbReference>
<dbReference type="Gene3D" id="3.40.1280.10">
    <property type="match status" value="1"/>
</dbReference>
<dbReference type="Gene3D" id="1.10.1270.20">
    <property type="entry name" value="tRNA(m1g37)methyltransferase, domain 2"/>
    <property type="match status" value="1"/>
</dbReference>
<dbReference type="HAMAP" id="MF_00605">
    <property type="entry name" value="TrmD"/>
    <property type="match status" value="1"/>
</dbReference>
<dbReference type="InterPro" id="IPR029028">
    <property type="entry name" value="Alpha/beta_knot_MTases"/>
</dbReference>
<dbReference type="InterPro" id="IPR023148">
    <property type="entry name" value="tRNA_m1G_MeTrfase_C_sf"/>
</dbReference>
<dbReference type="InterPro" id="IPR002649">
    <property type="entry name" value="tRNA_m1G_MeTrfase_TrmD"/>
</dbReference>
<dbReference type="InterPro" id="IPR029026">
    <property type="entry name" value="tRNA_m1G_MTases_N"/>
</dbReference>
<dbReference type="InterPro" id="IPR016009">
    <property type="entry name" value="tRNA_MeTrfase_TRMD/TRM10"/>
</dbReference>
<dbReference type="NCBIfam" id="NF000648">
    <property type="entry name" value="PRK00026.1"/>
    <property type="match status" value="1"/>
</dbReference>
<dbReference type="NCBIfam" id="TIGR00088">
    <property type="entry name" value="trmD"/>
    <property type="match status" value="1"/>
</dbReference>
<dbReference type="PANTHER" id="PTHR46417">
    <property type="entry name" value="TRNA (GUANINE-N(1)-)-METHYLTRANSFERASE"/>
    <property type="match status" value="1"/>
</dbReference>
<dbReference type="PANTHER" id="PTHR46417:SF1">
    <property type="entry name" value="TRNA (GUANINE-N(1)-)-METHYLTRANSFERASE"/>
    <property type="match status" value="1"/>
</dbReference>
<dbReference type="Pfam" id="PF01746">
    <property type="entry name" value="tRNA_m1G_MT"/>
    <property type="match status" value="1"/>
</dbReference>
<dbReference type="PIRSF" id="PIRSF000386">
    <property type="entry name" value="tRNA_mtase"/>
    <property type="match status" value="1"/>
</dbReference>
<dbReference type="SUPFAM" id="SSF75217">
    <property type="entry name" value="alpha/beta knot"/>
    <property type="match status" value="1"/>
</dbReference>
<feature type="chain" id="PRO_1000006521" description="tRNA (guanine-N(1)-)-methyltransferase">
    <location>
        <begin position="1"/>
        <end position="248"/>
    </location>
</feature>
<feature type="binding site" evidence="1">
    <location>
        <position position="113"/>
    </location>
    <ligand>
        <name>S-adenosyl-L-methionine</name>
        <dbReference type="ChEBI" id="CHEBI:59789"/>
    </ligand>
</feature>
<feature type="binding site" evidence="1">
    <location>
        <begin position="133"/>
        <end position="138"/>
    </location>
    <ligand>
        <name>S-adenosyl-L-methionine</name>
        <dbReference type="ChEBI" id="CHEBI:59789"/>
    </ligand>
</feature>
<comment type="function">
    <text evidence="1">Specifically methylates guanosine-37 in various tRNAs.</text>
</comment>
<comment type="catalytic activity">
    <reaction evidence="1">
        <text>guanosine(37) in tRNA + S-adenosyl-L-methionine = N(1)-methylguanosine(37) in tRNA + S-adenosyl-L-homocysteine + H(+)</text>
        <dbReference type="Rhea" id="RHEA:36899"/>
        <dbReference type="Rhea" id="RHEA-COMP:10145"/>
        <dbReference type="Rhea" id="RHEA-COMP:10147"/>
        <dbReference type="ChEBI" id="CHEBI:15378"/>
        <dbReference type="ChEBI" id="CHEBI:57856"/>
        <dbReference type="ChEBI" id="CHEBI:59789"/>
        <dbReference type="ChEBI" id="CHEBI:73542"/>
        <dbReference type="ChEBI" id="CHEBI:74269"/>
        <dbReference type="EC" id="2.1.1.228"/>
    </reaction>
</comment>
<comment type="subunit">
    <text evidence="1">Homodimer.</text>
</comment>
<comment type="subcellular location">
    <subcellularLocation>
        <location evidence="1">Cytoplasm</location>
    </subcellularLocation>
</comment>
<comment type="similarity">
    <text evidence="1">Belongs to the RNA methyltransferase TrmD family.</text>
</comment>
<keyword id="KW-0963">Cytoplasm</keyword>
<keyword id="KW-0489">Methyltransferase</keyword>
<keyword id="KW-0949">S-adenosyl-L-methionine</keyword>
<keyword id="KW-0808">Transferase</keyword>
<keyword id="KW-0819">tRNA processing</keyword>
<organism>
    <name type="scientific">Shewanella sp. (strain MR-7)</name>
    <dbReference type="NCBI Taxonomy" id="60481"/>
    <lineage>
        <taxon>Bacteria</taxon>
        <taxon>Pseudomonadati</taxon>
        <taxon>Pseudomonadota</taxon>
        <taxon>Gammaproteobacteria</taxon>
        <taxon>Alteromonadales</taxon>
        <taxon>Shewanellaceae</taxon>
        <taxon>Shewanella</taxon>
    </lineage>
</organism>
<sequence length="248" mass="27489">MWLGVITLFPEMFRAVTDFGVTGRAVKNGLLELHTWNPRDFTHDRHSTVDDRPYGGGPGMLMMVQPLRDAIHAAKAAAGEEAKVIYLSPQGRKLDQQGVTELAESSRLILVCGRYEGIDERIIQTEVDEEWSVGDYVLSGGELPAMTLIDAVSRLVPGVLGKQASAEQDSFSDGLLDCPHYTRPESLDGLDVPAVLLSGNHEQIRLWRLQQSLGRTFLRRPELFENLALTDEQSTLLAQFVEAMDKNA</sequence>
<name>TRMD_SHESR</name>